<evidence type="ECO:0000255" key="1">
    <source>
        <dbReference type="HAMAP-Rule" id="MF_01385"/>
    </source>
</evidence>
<name>UREF_BURCJ</name>
<feature type="chain" id="PRO_1000145109" description="Urease accessory protein UreF">
    <location>
        <begin position="1"/>
        <end position="226"/>
    </location>
</feature>
<gene>
    <name evidence="1" type="primary">ureF</name>
    <name type="ordered locus">BceJ2315_30550</name>
    <name type="ORF">BCAL3108</name>
</gene>
<organism>
    <name type="scientific">Burkholderia cenocepacia (strain ATCC BAA-245 / DSM 16553 / LMG 16656 / NCTC 13227 / J2315 / CF5610)</name>
    <name type="common">Burkholderia cepacia (strain J2315)</name>
    <dbReference type="NCBI Taxonomy" id="216591"/>
    <lineage>
        <taxon>Bacteria</taxon>
        <taxon>Pseudomonadati</taxon>
        <taxon>Pseudomonadota</taxon>
        <taxon>Betaproteobacteria</taxon>
        <taxon>Burkholderiales</taxon>
        <taxon>Burkholderiaceae</taxon>
        <taxon>Burkholderia</taxon>
        <taxon>Burkholderia cepacia complex</taxon>
    </lineage>
</organism>
<keyword id="KW-0143">Chaperone</keyword>
<keyword id="KW-0963">Cytoplasm</keyword>
<keyword id="KW-0996">Nickel insertion</keyword>
<reference key="1">
    <citation type="journal article" date="2009" name="J. Bacteriol.">
        <title>The genome of Burkholderia cenocepacia J2315, an epidemic pathogen of cystic fibrosis patients.</title>
        <authorList>
            <person name="Holden M.T."/>
            <person name="Seth-Smith H.M."/>
            <person name="Crossman L.C."/>
            <person name="Sebaihia M."/>
            <person name="Bentley S.D."/>
            <person name="Cerdeno-Tarraga A.M."/>
            <person name="Thomson N.R."/>
            <person name="Bason N."/>
            <person name="Quail M.A."/>
            <person name="Sharp S."/>
            <person name="Cherevach I."/>
            <person name="Churcher C."/>
            <person name="Goodhead I."/>
            <person name="Hauser H."/>
            <person name="Holroyd N."/>
            <person name="Mungall K."/>
            <person name="Scott P."/>
            <person name="Walker D."/>
            <person name="White B."/>
            <person name="Rose H."/>
            <person name="Iversen P."/>
            <person name="Mil-Homens D."/>
            <person name="Rocha E.P."/>
            <person name="Fialho A.M."/>
            <person name="Baldwin A."/>
            <person name="Dowson C."/>
            <person name="Barrell B.G."/>
            <person name="Govan J.R."/>
            <person name="Vandamme P."/>
            <person name="Hart C.A."/>
            <person name="Mahenthiralingam E."/>
            <person name="Parkhill J."/>
        </authorList>
    </citation>
    <scope>NUCLEOTIDE SEQUENCE [LARGE SCALE GENOMIC DNA]</scope>
    <source>
        <strain>ATCC BAA-245 / DSM 16553 / LMG 16656 / NCTC 13227 / J2315 / CF5610</strain>
    </source>
</reference>
<sequence>MTTTELVALLHLASPALPIGAYSYSQGLEAALDANLIRDADSARDWIASGLTDVLAHGELPFLAHQLARWQTDDTHALAAENAWFVASRESAELRRETEQMGWSLAQLCASLEWGDAARRATLASLSPIALPTAFAYAAAAHDASADATLAAYAFGWVENQTSAALKAVPLGQLAGQRIIVALRGAIDAAVRRALATPPDAVNTFAPQLGILSARHETQYSRLFRS</sequence>
<protein>
    <recommendedName>
        <fullName evidence="1">Urease accessory protein UreF</fullName>
    </recommendedName>
</protein>
<proteinExistence type="inferred from homology"/>
<comment type="function">
    <text evidence="1">Required for maturation of urease via the functional incorporation of the urease nickel metallocenter.</text>
</comment>
<comment type="subunit">
    <text evidence="1">UreD, UreF and UreG form a complex that acts as a GTP-hydrolysis-dependent molecular chaperone, activating the urease apoprotein by helping to assemble the nickel containing metallocenter of UreC. The UreE protein probably delivers the nickel.</text>
</comment>
<comment type="subcellular location">
    <subcellularLocation>
        <location evidence="1">Cytoplasm</location>
    </subcellularLocation>
</comment>
<comment type="similarity">
    <text evidence="1">Belongs to the UreF family.</text>
</comment>
<dbReference type="EMBL" id="AM747720">
    <property type="protein sequence ID" value="CAR53432.1"/>
    <property type="molecule type" value="Genomic_DNA"/>
</dbReference>
<dbReference type="RefSeq" id="WP_012492899.1">
    <property type="nucleotide sequence ID" value="NC_011000.1"/>
</dbReference>
<dbReference type="SMR" id="B4ECC9"/>
<dbReference type="KEGG" id="bcj:BCAL3108"/>
<dbReference type="eggNOG" id="COG0830">
    <property type="taxonomic scope" value="Bacteria"/>
</dbReference>
<dbReference type="HOGENOM" id="CLU_049215_2_1_4"/>
<dbReference type="BioCyc" id="BCEN216591:G1G1V-3448-MONOMER"/>
<dbReference type="Proteomes" id="UP000001035">
    <property type="component" value="Chromosome 1"/>
</dbReference>
<dbReference type="GO" id="GO:0005737">
    <property type="term" value="C:cytoplasm"/>
    <property type="evidence" value="ECO:0007669"/>
    <property type="project" value="UniProtKB-SubCell"/>
</dbReference>
<dbReference type="GO" id="GO:0016151">
    <property type="term" value="F:nickel cation binding"/>
    <property type="evidence" value="ECO:0007669"/>
    <property type="project" value="UniProtKB-UniRule"/>
</dbReference>
<dbReference type="Gene3D" id="1.10.4190.10">
    <property type="entry name" value="Urease accessory protein UreF"/>
    <property type="match status" value="1"/>
</dbReference>
<dbReference type="HAMAP" id="MF_01385">
    <property type="entry name" value="UreF"/>
    <property type="match status" value="1"/>
</dbReference>
<dbReference type="InterPro" id="IPR002639">
    <property type="entry name" value="UreF"/>
</dbReference>
<dbReference type="InterPro" id="IPR038277">
    <property type="entry name" value="UreF_sf"/>
</dbReference>
<dbReference type="PANTHER" id="PTHR33620">
    <property type="entry name" value="UREASE ACCESSORY PROTEIN F"/>
    <property type="match status" value="1"/>
</dbReference>
<dbReference type="PANTHER" id="PTHR33620:SF1">
    <property type="entry name" value="UREASE ACCESSORY PROTEIN F"/>
    <property type="match status" value="1"/>
</dbReference>
<dbReference type="Pfam" id="PF01730">
    <property type="entry name" value="UreF"/>
    <property type="match status" value="1"/>
</dbReference>
<dbReference type="PIRSF" id="PIRSF009467">
    <property type="entry name" value="Ureas_acces_UreF"/>
    <property type="match status" value="1"/>
</dbReference>
<accession>B4ECC9</accession>